<dbReference type="EC" id="2.7.1.23" evidence="1"/>
<dbReference type="EMBL" id="AE017262">
    <property type="protein sequence ID" value="AAT03766.1"/>
    <property type="molecule type" value="Genomic_DNA"/>
</dbReference>
<dbReference type="RefSeq" id="WP_003726185.1">
    <property type="nucleotide sequence ID" value="NC_002973.6"/>
</dbReference>
<dbReference type="SMR" id="Q721J8"/>
<dbReference type="BindingDB" id="Q721J8"/>
<dbReference type="ChEMBL" id="CHEMBL3638359"/>
<dbReference type="KEGG" id="lmf:LMOf2365_0988"/>
<dbReference type="HOGENOM" id="CLU_008831_0_3_9"/>
<dbReference type="GO" id="GO:0005737">
    <property type="term" value="C:cytoplasm"/>
    <property type="evidence" value="ECO:0007669"/>
    <property type="project" value="UniProtKB-SubCell"/>
</dbReference>
<dbReference type="GO" id="GO:0005524">
    <property type="term" value="F:ATP binding"/>
    <property type="evidence" value="ECO:0007669"/>
    <property type="project" value="UniProtKB-KW"/>
</dbReference>
<dbReference type="GO" id="GO:0046872">
    <property type="term" value="F:metal ion binding"/>
    <property type="evidence" value="ECO:0007669"/>
    <property type="project" value="UniProtKB-UniRule"/>
</dbReference>
<dbReference type="GO" id="GO:0051287">
    <property type="term" value="F:NAD binding"/>
    <property type="evidence" value="ECO:0007669"/>
    <property type="project" value="UniProtKB-ARBA"/>
</dbReference>
<dbReference type="GO" id="GO:0003951">
    <property type="term" value="F:NAD+ kinase activity"/>
    <property type="evidence" value="ECO:0007669"/>
    <property type="project" value="UniProtKB-UniRule"/>
</dbReference>
<dbReference type="GO" id="GO:0019674">
    <property type="term" value="P:NAD metabolic process"/>
    <property type="evidence" value="ECO:0007669"/>
    <property type="project" value="InterPro"/>
</dbReference>
<dbReference type="GO" id="GO:0006741">
    <property type="term" value="P:NADP biosynthetic process"/>
    <property type="evidence" value="ECO:0007669"/>
    <property type="project" value="UniProtKB-UniRule"/>
</dbReference>
<dbReference type="FunFam" id="2.60.200.30:FF:000002">
    <property type="entry name" value="NAD kinase"/>
    <property type="match status" value="1"/>
</dbReference>
<dbReference type="Gene3D" id="3.40.50.10330">
    <property type="entry name" value="Probable inorganic polyphosphate/atp-NAD kinase, domain 1"/>
    <property type="match status" value="1"/>
</dbReference>
<dbReference type="Gene3D" id="2.60.200.30">
    <property type="entry name" value="Probable inorganic polyphosphate/atp-NAD kinase, domain 2"/>
    <property type="match status" value="1"/>
</dbReference>
<dbReference type="HAMAP" id="MF_00361">
    <property type="entry name" value="NAD_kinase"/>
    <property type="match status" value="1"/>
</dbReference>
<dbReference type="InterPro" id="IPR017438">
    <property type="entry name" value="ATP-NAD_kinase_N"/>
</dbReference>
<dbReference type="InterPro" id="IPR017437">
    <property type="entry name" value="ATP-NAD_kinase_PpnK-typ_C"/>
</dbReference>
<dbReference type="InterPro" id="IPR016064">
    <property type="entry name" value="NAD/diacylglycerol_kinase_sf"/>
</dbReference>
<dbReference type="InterPro" id="IPR002504">
    <property type="entry name" value="NADK"/>
</dbReference>
<dbReference type="NCBIfam" id="NF003424">
    <property type="entry name" value="PRK04885.1"/>
    <property type="match status" value="1"/>
</dbReference>
<dbReference type="PANTHER" id="PTHR20275">
    <property type="entry name" value="NAD KINASE"/>
    <property type="match status" value="1"/>
</dbReference>
<dbReference type="PANTHER" id="PTHR20275:SF0">
    <property type="entry name" value="NAD KINASE"/>
    <property type="match status" value="1"/>
</dbReference>
<dbReference type="Pfam" id="PF01513">
    <property type="entry name" value="NAD_kinase"/>
    <property type="match status" value="1"/>
</dbReference>
<dbReference type="Pfam" id="PF20143">
    <property type="entry name" value="NAD_kinase_C"/>
    <property type="match status" value="1"/>
</dbReference>
<dbReference type="SUPFAM" id="SSF111331">
    <property type="entry name" value="NAD kinase/diacylglycerol kinase-like"/>
    <property type="match status" value="1"/>
</dbReference>
<name>NADK1_LISMF</name>
<gene>
    <name evidence="1" type="primary">nadK1</name>
    <name type="ordered locus">LMOf2365_0988</name>
</gene>
<sequence>MKYMITSKGDEKSDLLRLNMIAGFGEYDMEYDDVEPEIVISIGGDGTFLSAFHQYEERLDEIAFIGIHTGHLGFYADWRPAEANKLVKLVAKGEYQKVSYPLLKTTVKYGIGKKEATYLALNESTVKSSGGPFVVDVVINDIHFERFRGDGLCMSTPSGTTAYNKSLGGALMHPSIEAMQLTEMASINNRVYRTIGSPLVFPKHHVVSLQPVNDKDFQISVDHLSILHRDVQEIRYEVSAKKIHFARFKSFPFWRRVHDSFIED</sequence>
<organism>
    <name type="scientific">Listeria monocytogenes serotype 4b (strain F2365)</name>
    <dbReference type="NCBI Taxonomy" id="265669"/>
    <lineage>
        <taxon>Bacteria</taxon>
        <taxon>Bacillati</taxon>
        <taxon>Bacillota</taxon>
        <taxon>Bacilli</taxon>
        <taxon>Bacillales</taxon>
        <taxon>Listeriaceae</taxon>
        <taxon>Listeria</taxon>
    </lineage>
</organism>
<protein>
    <recommendedName>
        <fullName evidence="1">NAD kinase 1</fullName>
        <ecNumber evidence="1">2.7.1.23</ecNumber>
    </recommendedName>
    <alternativeName>
        <fullName evidence="1">ATP-dependent NAD kinase 1</fullName>
    </alternativeName>
</protein>
<accession>Q721J8</accession>
<feature type="chain" id="PRO_0000120630" description="NAD kinase 1">
    <location>
        <begin position="1"/>
        <end position="264"/>
    </location>
</feature>
<feature type="active site" description="Proton acceptor" evidence="1">
    <location>
        <position position="45"/>
    </location>
</feature>
<feature type="binding site" evidence="1">
    <location>
        <begin position="45"/>
        <end position="46"/>
    </location>
    <ligand>
        <name>NAD(+)</name>
        <dbReference type="ChEBI" id="CHEBI:57540"/>
    </ligand>
</feature>
<feature type="binding site" evidence="1">
    <location>
        <begin position="122"/>
        <end position="123"/>
    </location>
    <ligand>
        <name>NAD(+)</name>
        <dbReference type="ChEBI" id="CHEBI:57540"/>
    </ligand>
</feature>
<feature type="binding site" evidence="1">
    <location>
        <position position="148"/>
    </location>
    <ligand>
        <name>NAD(+)</name>
        <dbReference type="ChEBI" id="CHEBI:57540"/>
    </ligand>
</feature>
<feature type="binding site" evidence="1">
    <location>
        <position position="150"/>
    </location>
    <ligand>
        <name>NAD(+)</name>
        <dbReference type="ChEBI" id="CHEBI:57540"/>
    </ligand>
</feature>
<feature type="binding site" evidence="1">
    <location>
        <begin position="161"/>
        <end position="166"/>
    </location>
    <ligand>
        <name>NAD(+)</name>
        <dbReference type="ChEBI" id="CHEBI:57540"/>
    </ligand>
</feature>
<feature type="binding site" evidence="1">
    <location>
        <position position="185"/>
    </location>
    <ligand>
        <name>NAD(+)</name>
        <dbReference type="ChEBI" id="CHEBI:57540"/>
    </ligand>
</feature>
<keyword id="KW-0067">ATP-binding</keyword>
<keyword id="KW-0963">Cytoplasm</keyword>
<keyword id="KW-0418">Kinase</keyword>
<keyword id="KW-0520">NAD</keyword>
<keyword id="KW-0521">NADP</keyword>
<keyword id="KW-0547">Nucleotide-binding</keyword>
<keyword id="KW-0808">Transferase</keyword>
<proteinExistence type="inferred from homology"/>
<reference key="1">
    <citation type="journal article" date="2004" name="Nucleic Acids Res.">
        <title>Whole genome comparisons of serotype 4b and 1/2a strains of the food-borne pathogen Listeria monocytogenes reveal new insights into the core genome components of this species.</title>
        <authorList>
            <person name="Nelson K.E."/>
            <person name="Fouts D.E."/>
            <person name="Mongodin E.F."/>
            <person name="Ravel J."/>
            <person name="DeBoy R.T."/>
            <person name="Kolonay J.F."/>
            <person name="Rasko D.A."/>
            <person name="Angiuoli S.V."/>
            <person name="Gill S.R."/>
            <person name="Paulsen I.T."/>
            <person name="Peterson J.D."/>
            <person name="White O."/>
            <person name="Nelson W.C."/>
            <person name="Nierman W.C."/>
            <person name="Beanan M.J."/>
            <person name="Brinkac L.M."/>
            <person name="Daugherty S.C."/>
            <person name="Dodson R.J."/>
            <person name="Durkin A.S."/>
            <person name="Madupu R."/>
            <person name="Haft D.H."/>
            <person name="Selengut J."/>
            <person name="Van Aken S.E."/>
            <person name="Khouri H.M."/>
            <person name="Fedorova N."/>
            <person name="Forberger H.A."/>
            <person name="Tran B."/>
            <person name="Kathariou S."/>
            <person name="Wonderling L.D."/>
            <person name="Uhlich G.A."/>
            <person name="Bayles D.O."/>
            <person name="Luchansky J.B."/>
            <person name="Fraser C.M."/>
        </authorList>
    </citation>
    <scope>NUCLEOTIDE SEQUENCE [LARGE SCALE GENOMIC DNA]</scope>
    <source>
        <strain>F2365</strain>
    </source>
</reference>
<evidence type="ECO:0000255" key="1">
    <source>
        <dbReference type="HAMAP-Rule" id="MF_00361"/>
    </source>
</evidence>
<comment type="function">
    <text evidence="1">Involved in the regulation of the intracellular balance of NAD and NADP, and is a key enzyme in the biosynthesis of NADP. Catalyzes specifically the phosphorylation on 2'-hydroxyl of the adenosine moiety of NAD to yield NADP.</text>
</comment>
<comment type="catalytic activity">
    <reaction evidence="1">
        <text>NAD(+) + ATP = ADP + NADP(+) + H(+)</text>
        <dbReference type="Rhea" id="RHEA:18629"/>
        <dbReference type="ChEBI" id="CHEBI:15378"/>
        <dbReference type="ChEBI" id="CHEBI:30616"/>
        <dbReference type="ChEBI" id="CHEBI:57540"/>
        <dbReference type="ChEBI" id="CHEBI:58349"/>
        <dbReference type="ChEBI" id="CHEBI:456216"/>
        <dbReference type="EC" id="2.7.1.23"/>
    </reaction>
</comment>
<comment type="cofactor">
    <cofactor evidence="1">
        <name>a divalent metal cation</name>
        <dbReference type="ChEBI" id="CHEBI:60240"/>
    </cofactor>
</comment>
<comment type="subcellular location">
    <subcellularLocation>
        <location evidence="1">Cytoplasm</location>
    </subcellularLocation>
</comment>
<comment type="similarity">
    <text evidence="1">Belongs to the NAD kinase family.</text>
</comment>